<keyword id="KW-0256">Endoplasmic reticulum</keyword>
<keyword id="KW-0275">Fatty acid biosynthesis</keyword>
<keyword id="KW-0276">Fatty acid metabolism</keyword>
<keyword id="KW-0444">Lipid biosynthesis</keyword>
<keyword id="KW-0443">Lipid metabolism</keyword>
<keyword id="KW-0472">Membrane</keyword>
<keyword id="KW-1185">Reference proteome</keyword>
<keyword id="KW-0808">Transferase</keyword>
<keyword id="KW-0812">Transmembrane</keyword>
<keyword id="KW-1133">Transmembrane helix</keyword>
<dbReference type="EC" id="2.3.1.199" evidence="3"/>
<dbReference type="EMBL" id="CM000364">
    <property type="protein sequence ID" value="EDX13554.1"/>
    <property type="molecule type" value="Genomic_DNA"/>
</dbReference>
<dbReference type="SMR" id="B4QVX4"/>
<dbReference type="STRING" id="7240.B4QVX4"/>
<dbReference type="HOGENOM" id="CLU_048483_0_2_1"/>
<dbReference type="OMA" id="VAFPQCL"/>
<dbReference type="OrthoDB" id="434092at2759"/>
<dbReference type="PhylomeDB" id="B4QVX4"/>
<dbReference type="Proteomes" id="UP000000304">
    <property type="component" value="Chromosome 3R"/>
</dbReference>
<dbReference type="GO" id="GO:0005789">
    <property type="term" value="C:endoplasmic reticulum membrane"/>
    <property type="evidence" value="ECO:0007669"/>
    <property type="project" value="UniProtKB-SubCell"/>
</dbReference>
<dbReference type="GO" id="GO:0009922">
    <property type="term" value="F:fatty acid elongase activity"/>
    <property type="evidence" value="ECO:0007669"/>
    <property type="project" value="UniProtKB-EC"/>
</dbReference>
<dbReference type="GO" id="GO:0007619">
    <property type="term" value="P:courtship behavior"/>
    <property type="evidence" value="ECO:0007669"/>
    <property type="project" value="EnsemblMetazoa"/>
</dbReference>
<dbReference type="GO" id="GO:0034625">
    <property type="term" value="P:fatty acid elongation, monounsaturated fatty acid"/>
    <property type="evidence" value="ECO:0007669"/>
    <property type="project" value="TreeGrafter"/>
</dbReference>
<dbReference type="GO" id="GO:0034626">
    <property type="term" value="P:fatty acid elongation, polyunsaturated fatty acid"/>
    <property type="evidence" value="ECO:0007669"/>
    <property type="project" value="TreeGrafter"/>
</dbReference>
<dbReference type="GO" id="GO:0019367">
    <property type="term" value="P:fatty acid elongation, saturated fatty acid"/>
    <property type="evidence" value="ECO:0007669"/>
    <property type="project" value="TreeGrafter"/>
</dbReference>
<dbReference type="GO" id="GO:0042810">
    <property type="term" value="P:pheromone metabolic process"/>
    <property type="evidence" value="ECO:0007669"/>
    <property type="project" value="EnsemblMetazoa"/>
</dbReference>
<dbReference type="GO" id="GO:0030148">
    <property type="term" value="P:sphingolipid biosynthetic process"/>
    <property type="evidence" value="ECO:0007669"/>
    <property type="project" value="TreeGrafter"/>
</dbReference>
<dbReference type="GO" id="GO:0042761">
    <property type="term" value="P:very long-chain fatty acid biosynthetic process"/>
    <property type="evidence" value="ECO:0007669"/>
    <property type="project" value="EnsemblMetazoa"/>
</dbReference>
<dbReference type="InterPro" id="IPR030457">
    <property type="entry name" value="ELO_CS"/>
</dbReference>
<dbReference type="InterPro" id="IPR002076">
    <property type="entry name" value="ELO_fam"/>
</dbReference>
<dbReference type="PANTHER" id="PTHR11157:SF116">
    <property type="entry name" value="ELONGATION OF VERY LONG CHAIN FATTY ACIDS PROTEIN-RELATED"/>
    <property type="match status" value="1"/>
</dbReference>
<dbReference type="PANTHER" id="PTHR11157">
    <property type="entry name" value="FATTY ACID ACYL TRANSFERASE-RELATED"/>
    <property type="match status" value="1"/>
</dbReference>
<dbReference type="Pfam" id="PF01151">
    <property type="entry name" value="ELO"/>
    <property type="match status" value="1"/>
</dbReference>
<dbReference type="PROSITE" id="PS01188">
    <property type="entry name" value="ELO"/>
    <property type="match status" value="1"/>
</dbReference>
<sequence>MFAPIDPVKIPVFSDPWITMATLSGYLLFVLKLGPKIMENRKPFHLSGVIRVYNIFQILYNGLILVLGVHFLFVLKAYQISCIVSLPMDHKYKDRERLICILYMLNKFVDLVETIFFVLRKKDRQISFLHVFHHFAMAFLGYLYYYFHGYGGVAFPQCLCLLNTAVHVIMYAYYYLSSISQELQRSLWWKKYITIAQLVQFGIILLHCTITLAQPDCAVNRPLTYGCGSLSAFFAVIFSQFYYHNYIKPGEKSSKQSAIHKNL</sequence>
<reference evidence="7" key="1">
    <citation type="journal article" date="2007" name="Nature">
        <title>Evolution of genes and genomes on the Drosophila phylogeny.</title>
        <authorList>
            <consortium name="Drosophila 12 genomes consortium"/>
        </authorList>
    </citation>
    <scope>NUCLEOTIDE SEQUENCE [LARGE SCALE GENOMIC DNA]</scope>
</reference>
<reference evidence="6" key="2">
    <citation type="journal article" date="2007" name="Proc. Natl. Acad. Sci. U.S.A.">
        <title>A female-biased expressed elongase involved in long-chain hydrocarbon biosynthesis and courtship behavior in Drosophila melanogaster.</title>
        <authorList>
            <person name="Chertemps T."/>
            <person name="Duportets L."/>
            <person name="Labeur C."/>
            <person name="Ueda R."/>
            <person name="Takahashi K."/>
            <person name="Saigo K."/>
            <person name="Wicker-Thomas C."/>
        </authorList>
    </citation>
    <scope>TISSUE SPECIFICITY</scope>
</reference>
<accession>B4QVX4</accession>
<proteinExistence type="evidence at transcript level"/>
<protein>
    <recommendedName>
        <fullName evidence="6">Very long chain fatty acid elongase F</fullName>
        <ecNumber evidence="3">2.3.1.199</ecNumber>
    </recommendedName>
    <alternativeName>
        <fullName evidence="1">Elongation of very long chain fatty acids protein F</fullName>
    </alternativeName>
    <alternativeName>
        <fullName evidence="3">Very-long-chain 3-oxoacyl-CoA synthase</fullName>
    </alternativeName>
</protein>
<gene>
    <name type="ORF">GD18654</name>
</gene>
<feature type="chain" id="PRO_0000439076" description="Very long chain fatty acid elongase F">
    <location>
        <begin position="1"/>
        <end position="263"/>
    </location>
</feature>
<feature type="transmembrane region" description="Helical" evidence="2">
    <location>
        <begin position="10"/>
        <end position="30"/>
    </location>
</feature>
<feature type="transmembrane region" description="Helical" evidence="2">
    <location>
        <begin position="55"/>
        <end position="75"/>
    </location>
</feature>
<feature type="transmembrane region" description="Helical" evidence="2">
    <location>
        <begin position="98"/>
        <end position="118"/>
    </location>
</feature>
<feature type="transmembrane region" description="Helical" evidence="2">
    <location>
        <begin position="135"/>
        <end position="155"/>
    </location>
</feature>
<feature type="transmembrane region" description="Helical" evidence="2">
    <location>
        <begin position="159"/>
        <end position="179"/>
    </location>
</feature>
<feature type="transmembrane region" description="Helical" evidence="2">
    <location>
        <begin position="193"/>
        <end position="213"/>
    </location>
</feature>
<feature type="transmembrane region" description="Helical" evidence="2">
    <location>
        <begin position="223"/>
        <end position="243"/>
    </location>
</feature>
<name>ELOF_DROSI</name>
<organism evidence="7">
    <name type="scientific">Drosophila simulans</name>
    <name type="common">Fruit fly</name>
    <dbReference type="NCBI Taxonomy" id="7240"/>
    <lineage>
        <taxon>Eukaryota</taxon>
        <taxon>Metazoa</taxon>
        <taxon>Ecdysozoa</taxon>
        <taxon>Arthropoda</taxon>
        <taxon>Hexapoda</taxon>
        <taxon>Insecta</taxon>
        <taxon>Pterygota</taxon>
        <taxon>Neoptera</taxon>
        <taxon>Endopterygota</taxon>
        <taxon>Diptera</taxon>
        <taxon>Brachycera</taxon>
        <taxon>Muscomorpha</taxon>
        <taxon>Ephydroidea</taxon>
        <taxon>Drosophilidae</taxon>
        <taxon>Drosophila</taxon>
        <taxon>Sophophora</taxon>
    </lineage>
</organism>
<evidence type="ECO:0000250" key="1">
    <source>
        <dbReference type="UniProtKB" id="Q9VH58"/>
    </source>
</evidence>
<evidence type="ECO:0000255" key="2"/>
<evidence type="ECO:0000255" key="3">
    <source>
        <dbReference type="RuleBase" id="RU361115"/>
    </source>
</evidence>
<evidence type="ECO:0000269" key="4">
    <source>
    </source>
</evidence>
<evidence type="ECO:0000303" key="5">
    <source>
    </source>
</evidence>
<evidence type="ECO:0000305" key="6"/>
<evidence type="ECO:0000312" key="7">
    <source>
        <dbReference type="Proteomes" id="UP000000304"/>
    </source>
</evidence>
<comment type="function">
    <text evidence="1">Condensing enzyme that elongates saturated and monounsaturated very long chain fatty acids, to yield products up to 30 carbons in length.</text>
</comment>
<comment type="catalytic activity">
    <reaction evidence="3">
        <text>a very-long-chain acyl-CoA + malonyl-CoA + H(+) = a very-long-chain 3-oxoacyl-CoA + CO2 + CoA</text>
        <dbReference type="Rhea" id="RHEA:32727"/>
        <dbReference type="ChEBI" id="CHEBI:15378"/>
        <dbReference type="ChEBI" id="CHEBI:16526"/>
        <dbReference type="ChEBI" id="CHEBI:57287"/>
        <dbReference type="ChEBI" id="CHEBI:57384"/>
        <dbReference type="ChEBI" id="CHEBI:90725"/>
        <dbReference type="ChEBI" id="CHEBI:90736"/>
        <dbReference type="EC" id="2.3.1.199"/>
    </reaction>
</comment>
<comment type="subcellular location">
    <subcellularLocation>
        <location evidence="1">Endoplasmic reticulum membrane</location>
        <topology evidence="2">Multi-pass membrane protein</topology>
    </subcellularLocation>
</comment>
<comment type="tissue specificity">
    <text evidence="4">No expression in adults.</text>
</comment>
<comment type="miscellaneous">
    <text evidence="5">In D.melanogaster, functions in the elongation of long-chain C27 and C29 hydrocarbons. However, no expression is detected in D.simulans adult females or males which synthesize only short-chain C23 and C25 hydrocarbons.</text>
</comment>
<comment type="similarity">
    <text evidence="6">Belongs to the ELO family.</text>
</comment>